<dbReference type="EC" id="2.8.1.-"/>
<dbReference type="EMBL" id="AL590842">
    <property type="protein sequence ID" value="CAL20098.1"/>
    <property type="status" value="ALT_INIT"/>
    <property type="molecule type" value="Genomic_DNA"/>
</dbReference>
<dbReference type="EMBL" id="AE009952">
    <property type="protein sequence ID" value="AAM86275.1"/>
    <property type="molecule type" value="Genomic_DNA"/>
</dbReference>
<dbReference type="EMBL" id="AE017042">
    <property type="protein sequence ID" value="AAS61581.1"/>
    <property type="molecule type" value="Genomic_DNA"/>
</dbReference>
<dbReference type="PIR" id="AH0176">
    <property type="entry name" value="AH0176"/>
</dbReference>
<dbReference type="RefSeq" id="WP_002213046.1">
    <property type="nucleotide sequence ID" value="NZ_WUCM01000066.1"/>
</dbReference>
<dbReference type="RefSeq" id="YP_002346468.1">
    <property type="nucleotide sequence ID" value="NC_003143.1"/>
</dbReference>
<dbReference type="SMR" id="Q8ZG65"/>
<dbReference type="STRING" id="214092.YPO1447"/>
<dbReference type="PaxDb" id="214092-YPO1447"/>
<dbReference type="DNASU" id="1147670"/>
<dbReference type="EnsemblBacteria" id="AAS61581">
    <property type="protein sequence ID" value="AAS61581"/>
    <property type="gene ID" value="YP_1338"/>
</dbReference>
<dbReference type="GeneID" id="57977116"/>
<dbReference type="KEGG" id="ype:YPO1447"/>
<dbReference type="KEGG" id="ypk:y2723"/>
<dbReference type="KEGG" id="ypm:YP_1338"/>
<dbReference type="PATRIC" id="fig|214092.21.peg.1773"/>
<dbReference type="eggNOG" id="COG2920">
    <property type="taxonomic scope" value="Bacteria"/>
</dbReference>
<dbReference type="HOGENOM" id="CLU_153199_1_0_6"/>
<dbReference type="OMA" id="LPKPTNC"/>
<dbReference type="OrthoDB" id="9786347at2"/>
<dbReference type="Proteomes" id="UP000000815">
    <property type="component" value="Chromosome"/>
</dbReference>
<dbReference type="Proteomes" id="UP000001019">
    <property type="component" value="Chromosome"/>
</dbReference>
<dbReference type="Proteomes" id="UP000002490">
    <property type="component" value="Chromosome"/>
</dbReference>
<dbReference type="GO" id="GO:0005737">
    <property type="term" value="C:cytoplasm"/>
    <property type="evidence" value="ECO:0007669"/>
    <property type="project" value="UniProtKB-SubCell"/>
</dbReference>
<dbReference type="GO" id="GO:0097163">
    <property type="term" value="F:sulfur carrier activity"/>
    <property type="evidence" value="ECO:0000318"/>
    <property type="project" value="GO_Central"/>
</dbReference>
<dbReference type="GO" id="GO:0016740">
    <property type="term" value="F:transferase activity"/>
    <property type="evidence" value="ECO:0007669"/>
    <property type="project" value="UniProtKB-KW"/>
</dbReference>
<dbReference type="GO" id="GO:0002143">
    <property type="term" value="P:tRNA wobble position uridine thiolation"/>
    <property type="evidence" value="ECO:0000318"/>
    <property type="project" value="GO_Central"/>
</dbReference>
<dbReference type="FunFam" id="1.10.10.370:FF:000001">
    <property type="entry name" value="Sulfurtransferase"/>
    <property type="match status" value="1"/>
</dbReference>
<dbReference type="FunFam" id="3.30.1420.10:FF:000001">
    <property type="entry name" value="Sulfurtransferase"/>
    <property type="match status" value="1"/>
</dbReference>
<dbReference type="Gene3D" id="3.30.1420.10">
    <property type="match status" value="1"/>
</dbReference>
<dbReference type="Gene3D" id="1.10.10.370">
    <property type="entry name" value="DsrC-like protein, C-terminal domain"/>
    <property type="match status" value="1"/>
</dbReference>
<dbReference type="InterPro" id="IPR042072">
    <property type="entry name" value="DsrC-like_C"/>
</dbReference>
<dbReference type="InterPro" id="IPR025526">
    <property type="entry name" value="DsrC-like_dom_sf"/>
</dbReference>
<dbReference type="InterPro" id="IPR043163">
    <property type="entry name" value="DsrC-like_N"/>
</dbReference>
<dbReference type="InterPro" id="IPR007453">
    <property type="entry name" value="DsrC/TusE"/>
</dbReference>
<dbReference type="NCBIfam" id="TIGR03342">
    <property type="entry name" value="dsrC_tusE_dsvC"/>
    <property type="match status" value="1"/>
</dbReference>
<dbReference type="NCBIfam" id="NF008562">
    <property type="entry name" value="PRK11508.1"/>
    <property type="match status" value="1"/>
</dbReference>
<dbReference type="PANTHER" id="PTHR37010">
    <property type="entry name" value="SULFURTRANSFERASE TUSE"/>
    <property type="match status" value="1"/>
</dbReference>
<dbReference type="PANTHER" id="PTHR37010:SF1">
    <property type="entry name" value="SULFURTRANSFERASE TUSE"/>
    <property type="match status" value="1"/>
</dbReference>
<dbReference type="Pfam" id="PF04358">
    <property type="entry name" value="DsrC"/>
    <property type="match status" value="1"/>
</dbReference>
<dbReference type="PIRSF" id="PIRSF006223">
    <property type="entry name" value="DsrC_TusE"/>
    <property type="match status" value="1"/>
</dbReference>
<dbReference type="SUPFAM" id="SSF69721">
    <property type="entry name" value="DsrC, the gamma subunit of dissimilatory sulfite reductase"/>
    <property type="match status" value="1"/>
</dbReference>
<evidence type="ECO:0000250" key="1"/>
<evidence type="ECO:0000305" key="2"/>
<organism>
    <name type="scientific">Yersinia pestis</name>
    <dbReference type="NCBI Taxonomy" id="632"/>
    <lineage>
        <taxon>Bacteria</taxon>
        <taxon>Pseudomonadati</taxon>
        <taxon>Pseudomonadota</taxon>
        <taxon>Gammaproteobacteria</taxon>
        <taxon>Enterobacterales</taxon>
        <taxon>Yersiniaceae</taxon>
        <taxon>Yersinia</taxon>
    </lineage>
</organism>
<keyword id="KW-0963">Cytoplasm</keyword>
<keyword id="KW-1185">Reference proteome</keyword>
<keyword id="KW-0808">Transferase</keyword>
<keyword id="KW-0819">tRNA processing</keyword>
<protein>
    <recommendedName>
        <fullName>Sulfurtransferase TusE</fullName>
        <ecNumber>2.8.1.-</ecNumber>
    </recommendedName>
    <alternativeName>
        <fullName>tRNA 2-thiouridine synthesizing protein E</fullName>
    </alternativeName>
</protein>
<sequence length="109" mass="12394">MLEFEGRIIDTDAQGYLKNSTDWSEALAPVLAEQEGITLTEPHWEVVRFVRAFYQEFNTSPAIRMLVKAMAQKYGEEKGNSRYLYRLFPKGPAKQATKIAGLPKPVKCI</sequence>
<accession>Q8ZG65</accession>
<accession>Q0WGX0</accession>
<accession>Q74VH1</accession>
<accession>Q8D060</accession>
<feature type="chain" id="PRO_0000234622" description="Sulfurtransferase TusE">
    <location>
        <begin position="1"/>
        <end position="109"/>
    </location>
</feature>
<feature type="active site" description="Cysteine persulfide intermediate" evidence="1">
    <location>
        <position position="108"/>
    </location>
</feature>
<proteinExistence type="inferred from homology"/>
<comment type="function">
    <text evidence="1">Part of a sulfur-relay system required for 2-thiolation of 5-methylaminomethyl-2-thiouridine (mnm(5)s(2)U) at tRNA wobble positions. Could accept sulfur from TusD (By similarity).</text>
</comment>
<comment type="subunit">
    <text evidence="1">Interacts with the TusBCD complex. Interacts with MnmA (By similarity).</text>
</comment>
<comment type="subcellular location">
    <subcellularLocation>
        <location evidence="1">Cytoplasm</location>
    </subcellularLocation>
</comment>
<comment type="similarity">
    <text evidence="2">Belongs to the DsrC/TusE family.</text>
</comment>
<comment type="sequence caution" evidence="2">
    <conflict type="erroneous initiation">
        <sequence resource="EMBL-CDS" id="CAL20098"/>
    </conflict>
</comment>
<gene>
    <name type="primary">tusE</name>
    <name type="ordered locus">YPO1447</name>
    <name type="ordered locus">y2723</name>
    <name type="ordered locus">YP_1338</name>
</gene>
<name>TUSE_YERPE</name>
<reference key="1">
    <citation type="journal article" date="2001" name="Nature">
        <title>Genome sequence of Yersinia pestis, the causative agent of plague.</title>
        <authorList>
            <person name="Parkhill J."/>
            <person name="Wren B.W."/>
            <person name="Thomson N.R."/>
            <person name="Titball R.W."/>
            <person name="Holden M.T.G."/>
            <person name="Prentice M.B."/>
            <person name="Sebaihia M."/>
            <person name="James K.D."/>
            <person name="Churcher C.M."/>
            <person name="Mungall K.L."/>
            <person name="Baker S."/>
            <person name="Basham D."/>
            <person name="Bentley S.D."/>
            <person name="Brooks K."/>
            <person name="Cerdeno-Tarraga A.-M."/>
            <person name="Chillingworth T."/>
            <person name="Cronin A."/>
            <person name="Davies R.M."/>
            <person name="Davis P."/>
            <person name="Dougan G."/>
            <person name="Feltwell T."/>
            <person name="Hamlin N."/>
            <person name="Holroyd S."/>
            <person name="Jagels K."/>
            <person name="Karlyshev A.V."/>
            <person name="Leather S."/>
            <person name="Moule S."/>
            <person name="Oyston P.C.F."/>
            <person name="Quail M.A."/>
            <person name="Rutherford K.M."/>
            <person name="Simmonds M."/>
            <person name="Skelton J."/>
            <person name="Stevens K."/>
            <person name="Whitehead S."/>
            <person name="Barrell B.G."/>
        </authorList>
    </citation>
    <scope>NUCLEOTIDE SEQUENCE [LARGE SCALE GENOMIC DNA]</scope>
    <source>
        <strain>CO-92 / Biovar Orientalis</strain>
    </source>
</reference>
<reference key="2">
    <citation type="journal article" date="2002" name="J. Bacteriol.">
        <title>Genome sequence of Yersinia pestis KIM.</title>
        <authorList>
            <person name="Deng W."/>
            <person name="Burland V."/>
            <person name="Plunkett G. III"/>
            <person name="Boutin A."/>
            <person name="Mayhew G.F."/>
            <person name="Liss P."/>
            <person name="Perna N.T."/>
            <person name="Rose D.J."/>
            <person name="Mau B."/>
            <person name="Zhou S."/>
            <person name="Schwartz D.C."/>
            <person name="Fetherston J.D."/>
            <person name="Lindler L.E."/>
            <person name="Brubaker R.R."/>
            <person name="Plano G.V."/>
            <person name="Straley S.C."/>
            <person name="McDonough K.A."/>
            <person name="Nilles M.L."/>
            <person name="Matson J.S."/>
            <person name="Blattner F.R."/>
            <person name="Perry R.D."/>
        </authorList>
    </citation>
    <scope>NUCLEOTIDE SEQUENCE [LARGE SCALE GENOMIC DNA]</scope>
    <source>
        <strain>KIM10+ / Biovar Mediaevalis</strain>
    </source>
</reference>
<reference key="3">
    <citation type="journal article" date="2004" name="DNA Res.">
        <title>Complete genome sequence of Yersinia pestis strain 91001, an isolate avirulent to humans.</title>
        <authorList>
            <person name="Song Y."/>
            <person name="Tong Z."/>
            <person name="Wang J."/>
            <person name="Wang L."/>
            <person name="Guo Z."/>
            <person name="Han Y."/>
            <person name="Zhang J."/>
            <person name="Pei D."/>
            <person name="Zhou D."/>
            <person name="Qin H."/>
            <person name="Pang X."/>
            <person name="Han Y."/>
            <person name="Zhai J."/>
            <person name="Li M."/>
            <person name="Cui B."/>
            <person name="Qi Z."/>
            <person name="Jin L."/>
            <person name="Dai R."/>
            <person name="Chen F."/>
            <person name="Li S."/>
            <person name="Ye C."/>
            <person name="Du Z."/>
            <person name="Lin W."/>
            <person name="Wang J."/>
            <person name="Yu J."/>
            <person name="Yang H."/>
            <person name="Wang J."/>
            <person name="Huang P."/>
            <person name="Yang R."/>
        </authorList>
    </citation>
    <scope>NUCLEOTIDE SEQUENCE [LARGE SCALE GENOMIC DNA]</scope>
    <source>
        <strain>91001 / Biovar Mediaevalis</strain>
    </source>
</reference>